<name>MDH_MYCUA</name>
<accession>A0PVV1</accession>
<organism>
    <name type="scientific">Mycobacterium ulcerans (strain Agy99)</name>
    <dbReference type="NCBI Taxonomy" id="362242"/>
    <lineage>
        <taxon>Bacteria</taxon>
        <taxon>Bacillati</taxon>
        <taxon>Actinomycetota</taxon>
        <taxon>Actinomycetes</taxon>
        <taxon>Mycobacteriales</taxon>
        <taxon>Mycobacteriaceae</taxon>
        <taxon>Mycobacterium</taxon>
        <taxon>Mycobacterium ulcerans group</taxon>
    </lineage>
</organism>
<evidence type="ECO:0000255" key="1">
    <source>
        <dbReference type="HAMAP-Rule" id="MF_01517"/>
    </source>
</evidence>
<protein>
    <recommendedName>
        <fullName evidence="1">Malate dehydrogenase</fullName>
        <ecNumber evidence="1">1.1.1.37</ecNumber>
    </recommendedName>
</protein>
<keyword id="KW-0520">NAD</keyword>
<keyword id="KW-0560">Oxidoreductase</keyword>
<keyword id="KW-0816">Tricarboxylic acid cycle</keyword>
<dbReference type="EC" id="1.1.1.37" evidence="1"/>
<dbReference type="EMBL" id="CP000325">
    <property type="protein sequence ID" value="ABL06470.1"/>
    <property type="molecule type" value="Genomic_DNA"/>
</dbReference>
<dbReference type="RefSeq" id="WP_011742069.1">
    <property type="nucleotide sequence ID" value="NC_008611.1"/>
</dbReference>
<dbReference type="SMR" id="A0PVV1"/>
<dbReference type="KEGG" id="mul:MUL_4504"/>
<dbReference type="eggNOG" id="COG0039">
    <property type="taxonomic scope" value="Bacteria"/>
</dbReference>
<dbReference type="HOGENOM" id="CLU_040727_2_0_11"/>
<dbReference type="Proteomes" id="UP000000765">
    <property type="component" value="Chromosome"/>
</dbReference>
<dbReference type="GO" id="GO:0030060">
    <property type="term" value="F:L-malate dehydrogenase (NAD+) activity"/>
    <property type="evidence" value="ECO:0007669"/>
    <property type="project" value="UniProtKB-UniRule"/>
</dbReference>
<dbReference type="GO" id="GO:0006108">
    <property type="term" value="P:malate metabolic process"/>
    <property type="evidence" value="ECO:0007669"/>
    <property type="project" value="InterPro"/>
</dbReference>
<dbReference type="GO" id="GO:0006099">
    <property type="term" value="P:tricarboxylic acid cycle"/>
    <property type="evidence" value="ECO:0007669"/>
    <property type="project" value="UniProtKB-UniRule"/>
</dbReference>
<dbReference type="CDD" id="cd01338">
    <property type="entry name" value="MDH_chloroplast-like"/>
    <property type="match status" value="1"/>
</dbReference>
<dbReference type="FunFam" id="3.40.50.720:FF:000010">
    <property type="entry name" value="Malate dehydrogenase"/>
    <property type="match status" value="1"/>
</dbReference>
<dbReference type="FunFam" id="3.90.110.10:FF:000002">
    <property type="entry name" value="Malate dehydrogenase"/>
    <property type="match status" value="1"/>
</dbReference>
<dbReference type="Gene3D" id="3.90.110.10">
    <property type="entry name" value="Lactate dehydrogenase/glycoside hydrolase, family 4, C-terminal"/>
    <property type="match status" value="1"/>
</dbReference>
<dbReference type="Gene3D" id="3.40.50.720">
    <property type="entry name" value="NAD(P)-binding Rossmann-like Domain"/>
    <property type="match status" value="1"/>
</dbReference>
<dbReference type="HAMAP" id="MF_01517">
    <property type="entry name" value="Malate_dehydrog_2"/>
    <property type="match status" value="1"/>
</dbReference>
<dbReference type="InterPro" id="IPR001557">
    <property type="entry name" value="L-lactate/malate_DH"/>
</dbReference>
<dbReference type="InterPro" id="IPR022383">
    <property type="entry name" value="Lactate/malate_DH_C"/>
</dbReference>
<dbReference type="InterPro" id="IPR001236">
    <property type="entry name" value="Lactate/malate_DH_N"/>
</dbReference>
<dbReference type="InterPro" id="IPR015955">
    <property type="entry name" value="Lactate_DH/Glyco_Ohase_4_C"/>
</dbReference>
<dbReference type="InterPro" id="IPR001252">
    <property type="entry name" value="Malate_DH_AS"/>
</dbReference>
<dbReference type="InterPro" id="IPR010945">
    <property type="entry name" value="Malate_DH_type2"/>
</dbReference>
<dbReference type="InterPro" id="IPR036291">
    <property type="entry name" value="NAD(P)-bd_dom_sf"/>
</dbReference>
<dbReference type="NCBIfam" id="TIGR01759">
    <property type="entry name" value="MalateDH-SF1"/>
    <property type="match status" value="1"/>
</dbReference>
<dbReference type="NCBIfam" id="NF003916">
    <property type="entry name" value="PRK05442.1"/>
    <property type="match status" value="1"/>
</dbReference>
<dbReference type="PANTHER" id="PTHR23382">
    <property type="entry name" value="MALATE DEHYDROGENASE"/>
    <property type="match status" value="1"/>
</dbReference>
<dbReference type="Pfam" id="PF02866">
    <property type="entry name" value="Ldh_1_C"/>
    <property type="match status" value="1"/>
</dbReference>
<dbReference type="Pfam" id="PF00056">
    <property type="entry name" value="Ldh_1_N"/>
    <property type="match status" value="1"/>
</dbReference>
<dbReference type="PIRSF" id="PIRSF000102">
    <property type="entry name" value="Lac_mal_DH"/>
    <property type="match status" value="1"/>
</dbReference>
<dbReference type="SUPFAM" id="SSF56327">
    <property type="entry name" value="LDH C-terminal domain-like"/>
    <property type="match status" value="1"/>
</dbReference>
<dbReference type="SUPFAM" id="SSF51735">
    <property type="entry name" value="NAD(P)-binding Rossmann-fold domains"/>
    <property type="match status" value="1"/>
</dbReference>
<dbReference type="PROSITE" id="PS00068">
    <property type="entry name" value="MDH"/>
    <property type="match status" value="1"/>
</dbReference>
<sequence length="329" mass="34610">MSASPLKVAVTGAAGQIGYSLLFRLASGSLLGPDRPIELRLLEIEPALKALEGVVMELDDCAFPLLSGVEIGSDANKIFDGANLALLVGARPRGPGMERSDLLEANGAIFTAQGKALNEVAADDIRVGVTGNPANTNALIAMTNAPDIPRERFSALTRLDHNRAISQLAAKTGVAVTDIKKMTIWGNHSATQYPDLFHAEVKGKNAAEVVNDQAWIEEYFIPTVAKRGATIIDARGASSAASAASASVDAARSWLLGTPADDWVSMAVLSDGSYGVPEGLISSFPVTTKDGNWSIVKGLEIDEFSRGRIDKTAAELADERKAVTELGLI</sequence>
<reference key="1">
    <citation type="journal article" date="2007" name="Genome Res.">
        <title>Reductive evolution and niche adaptation inferred from the genome of Mycobacterium ulcerans, the causative agent of Buruli ulcer.</title>
        <authorList>
            <person name="Stinear T.P."/>
            <person name="Seemann T."/>
            <person name="Pidot S."/>
            <person name="Frigui W."/>
            <person name="Reysset G."/>
            <person name="Garnier T."/>
            <person name="Meurice G."/>
            <person name="Simon D."/>
            <person name="Bouchier C."/>
            <person name="Ma L."/>
            <person name="Tichit M."/>
            <person name="Porter J.L."/>
            <person name="Ryan J."/>
            <person name="Johnson P.D.R."/>
            <person name="Davies J.K."/>
            <person name="Jenkin G.A."/>
            <person name="Small P.L.C."/>
            <person name="Jones L.M."/>
            <person name="Tekaia F."/>
            <person name="Laval F."/>
            <person name="Daffe M."/>
            <person name="Parkhill J."/>
            <person name="Cole S.T."/>
        </authorList>
    </citation>
    <scope>NUCLEOTIDE SEQUENCE [LARGE SCALE GENOMIC DNA]</scope>
    <source>
        <strain>Agy99</strain>
    </source>
</reference>
<feature type="chain" id="PRO_0000294394" description="Malate dehydrogenase">
    <location>
        <begin position="1"/>
        <end position="329"/>
    </location>
</feature>
<feature type="active site" description="Proton acceptor" evidence="1">
    <location>
        <position position="188"/>
    </location>
</feature>
<feature type="binding site" evidence="1">
    <location>
        <begin position="12"/>
        <end position="18"/>
    </location>
    <ligand>
        <name>NAD(+)</name>
        <dbReference type="ChEBI" id="CHEBI:57540"/>
    </ligand>
</feature>
<feature type="binding site" evidence="1">
    <location>
        <position position="93"/>
    </location>
    <ligand>
        <name>substrate</name>
    </ligand>
</feature>
<feature type="binding site" evidence="1">
    <location>
        <position position="99"/>
    </location>
    <ligand>
        <name>substrate</name>
    </ligand>
</feature>
<feature type="binding site" evidence="1">
    <location>
        <position position="106"/>
    </location>
    <ligand>
        <name>NAD(+)</name>
        <dbReference type="ChEBI" id="CHEBI:57540"/>
    </ligand>
</feature>
<feature type="binding site" evidence="1">
    <location>
        <position position="113"/>
    </location>
    <ligand>
        <name>NAD(+)</name>
        <dbReference type="ChEBI" id="CHEBI:57540"/>
    </ligand>
</feature>
<feature type="binding site" evidence="1">
    <location>
        <begin position="130"/>
        <end position="132"/>
    </location>
    <ligand>
        <name>NAD(+)</name>
        <dbReference type="ChEBI" id="CHEBI:57540"/>
    </ligand>
</feature>
<feature type="binding site" evidence="1">
    <location>
        <position position="132"/>
    </location>
    <ligand>
        <name>substrate</name>
    </ligand>
</feature>
<feature type="binding site" evidence="1">
    <location>
        <position position="163"/>
    </location>
    <ligand>
        <name>substrate</name>
    </ligand>
</feature>
<gene>
    <name evidence="1" type="primary">mdh</name>
    <name type="ordered locus">MUL_4504</name>
</gene>
<comment type="function">
    <text evidence="1">Catalyzes the reversible oxidation of malate to oxaloacetate.</text>
</comment>
<comment type="catalytic activity">
    <reaction evidence="1">
        <text>(S)-malate + NAD(+) = oxaloacetate + NADH + H(+)</text>
        <dbReference type="Rhea" id="RHEA:21432"/>
        <dbReference type="ChEBI" id="CHEBI:15378"/>
        <dbReference type="ChEBI" id="CHEBI:15589"/>
        <dbReference type="ChEBI" id="CHEBI:16452"/>
        <dbReference type="ChEBI" id="CHEBI:57540"/>
        <dbReference type="ChEBI" id="CHEBI:57945"/>
        <dbReference type="EC" id="1.1.1.37"/>
    </reaction>
</comment>
<comment type="similarity">
    <text evidence="1">Belongs to the LDH/MDH superfamily. MDH type 2 family.</text>
</comment>
<proteinExistence type="inferred from homology"/>